<accession>A0KIB2</accession>
<comment type="function">
    <text evidence="1">K(+)/H(+) antiporter that extrudes potassium in exchange for external protons and maintains the internal concentration of potassium under toxic levels.</text>
</comment>
<comment type="catalytic activity">
    <reaction evidence="1">
        <text>K(+)(in) + H(+)(out) = K(+)(out) + H(+)(in)</text>
        <dbReference type="Rhea" id="RHEA:29467"/>
        <dbReference type="ChEBI" id="CHEBI:15378"/>
        <dbReference type="ChEBI" id="CHEBI:29103"/>
    </reaction>
    <physiologicalReaction direction="left-to-right" evidence="1">
        <dbReference type="Rhea" id="RHEA:29468"/>
    </physiologicalReaction>
</comment>
<comment type="subcellular location">
    <subcellularLocation>
        <location evidence="1">Cell inner membrane</location>
        <topology evidence="1">Multi-pass membrane protein</topology>
    </subcellularLocation>
</comment>
<comment type="similarity">
    <text evidence="1">Belongs to the monovalent cation:proton antiporter 1 (CPA1) transporter (TC 2.A.36) family. NhaP2 subfamily.</text>
</comment>
<proteinExistence type="inferred from homology"/>
<gene>
    <name evidence="1" type="primary">nhaP2</name>
    <name type="synonym">cvrA</name>
    <name type="ordered locus">AHA_1475</name>
</gene>
<evidence type="ECO:0000255" key="1">
    <source>
        <dbReference type="HAMAP-Rule" id="MF_01075"/>
    </source>
</evidence>
<protein>
    <recommendedName>
        <fullName evidence="1">K(+)/H(+) antiporter NhaP2</fullName>
    </recommendedName>
    <alternativeName>
        <fullName evidence="1">Potassium/proton antiporter NhaP2</fullName>
    </alternativeName>
</protein>
<feature type="chain" id="PRO_1000064661" description="K(+)/H(+) antiporter NhaP2">
    <location>
        <begin position="1"/>
        <end position="575"/>
    </location>
</feature>
<feature type="transmembrane region" description="Helical" evidence="1">
    <location>
        <begin position="3"/>
        <end position="23"/>
    </location>
</feature>
<feature type="transmembrane region" description="Helical" evidence="1">
    <location>
        <begin position="30"/>
        <end position="50"/>
    </location>
</feature>
<feature type="transmembrane region" description="Helical" evidence="1">
    <location>
        <begin position="53"/>
        <end position="73"/>
    </location>
</feature>
<feature type="transmembrane region" description="Helical" evidence="1">
    <location>
        <begin position="95"/>
        <end position="115"/>
    </location>
</feature>
<feature type="transmembrane region" description="Helical" evidence="1">
    <location>
        <begin position="122"/>
        <end position="142"/>
    </location>
</feature>
<feature type="transmembrane region" description="Helical" evidence="1">
    <location>
        <begin position="196"/>
        <end position="216"/>
    </location>
</feature>
<feature type="transmembrane region" description="Helical" evidence="1">
    <location>
        <begin position="232"/>
        <end position="252"/>
    </location>
</feature>
<feature type="transmembrane region" description="Helical" evidence="1">
    <location>
        <begin position="271"/>
        <end position="291"/>
    </location>
</feature>
<feature type="transmembrane region" description="Helical" evidence="1">
    <location>
        <begin position="304"/>
        <end position="324"/>
    </location>
</feature>
<feature type="transmembrane region" description="Helical" evidence="1">
    <location>
        <begin position="335"/>
        <end position="355"/>
    </location>
</feature>
<feature type="transmembrane region" description="Helical" evidence="1">
    <location>
        <begin position="364"/>
        <end position="384"/>
    </location>
</feature>
<feature type="domain" description="RCK C-terminal" evidence="1">
    <location>
        <begin position="404"/>
        <end position="486"/>
    </location>
</feature>
<keyword id="KW-0050">Antiport</keyword>
<keyword id="KW-0997">Cell inner membrane</keyword>
<keyword id="KW-1003">Cell membrane</keyword>
<keyword id="KW-0406">Ion transport</keyword>
<keyword id="KW-0472">Membrane</keyword>
<keyword id="KW-0630">Potassium</keyword>
<keyword id="KW-0633">Potassium transport</keyword>
<keyword id="KW-1185">Reference proteome</keyword>
<keyword id="KW-0812">Transmembrane</keyword>
<keyword id="KW-1133">Transmembrane helix</keyword>
<keyword id="KW-0813">Transport</keyword>
<sequence length="575" mass="61421">MDAVTINSFFLVAALLVGASVLLSALSSRLGIPILVIFLAVGMLAGEDGPGGIHFADYSIAYLVGNLALAIILLDGGMRTRVSSFRVALWPALSLATVGVAITTGLTGLAAAWLFDLNLMQGMLIGAIVGSTDAAAVFSLLGGRSLNERVSATLEIESGSNDPMAVFLTVTLIEVLASAQQDLNAGFLLLQLLKQFGLGAGIGLGGGWLLWKLINSAKLAPGLYPLLTVSGGLLIFALTTAVGGSGILAIYLTGLLLGNLSLRSRSTTLSVLDGLTWLSQIGMFLVLGLLASPHKLLPIALPALALAMWMILFARPISVWIGLLPFKNFAPRERWFISWVGLRGAVPIILAVFPMMAGLPNAQLYFNVAFFVVLVSLILQGSSLPLASRLARVEVPAPPSPINRSGLEIDLDSQWETFVYRLSDEKWCIGSPLRDLRMPKGTRICALFRDQELLHPSGSTCLQSDDILCVIGHERDLPALGQLFSQAPEQDLGPRFFGDFLLEAAANLVDLAPLYGLDVSEVADQTLGHFIAHQLGDNLVVGDHVEWQGLIWTVAEMDEGEPRKIGVRFLEEDPV</sequence>
<dbReference type="EMBL" id="CP000462">
    <property type="protein sequence ID" value="ABK38543.1"/>
    <property type="molecule type" value="Genomic_DNA"/>
</dbReference>
<dbReference type="RefSeq" id="WP_011705375.1">
    <property type="nucleotide sequence ID" value="NC_008570.1"/>
</dbReference>
<dbReference type="RefSeq" id="YP_856013.1">
    <property type="nucleotide sequence ID" value="NC_008570.1"/>
</dbReference>
<dbReference type="SMR" id="A0KIB2"/>
<dbReference type="STRING" id="380703.AHA_1475"/>
<dbReference type="EnsemblBacteria" id="ABK38543">
    <property type="protein sequence ID" value="ABK38543"/>
    <property type="gene ID" value="AHA_1475"/>
</dbReference>
<dbReference type="GeneID" id="4488251"/>
<dbReference type="KEGG" id="aha:AHA_1475"/>
<dbReference type="PATRIC" id="fig|380703.7.peg.1483"/>
<dbReference type="eggNOG" id="COG3263">
    <property type="taxonomic scope" value="Bacteria"/>
</dbReference>
<dbReference type="HOGENOM" id="CLU_005912_9_2_6"/>
<dbReference type="OrthoDB" id="9810759at2"/>
<dbReference type="Proteomes" id="UP000000756">
    <property type="component" value="Chromosome"/>
</dbReference>
<dbReference type="GO" id="GO:0005886">
    <property type="term" value="C:plasma membrane"/>
    <property type="evidence" value="ECO:0007669"/>
    <property type="project" value="UniProtKB-SubCell"/>
</dbReference>
<dbReference type="GO" id="GO:0050660">
    <property type="term" value="F:flavin adenine dinucleotide binding"/>
    <property type="evidence" value="ECO:0007669"/>
    <property type="project" value="InterPro"/>
</dbReference>
<dbReference type="GO" id="GO:0015386">
    <property type="term" value="F:potassium:proton antiporter activity"/>
    <property type="evidence" value="ECO:0007669"/>
    <property type="project" value="UniProtKB-UniRule"/>
</dbReference>
<dbReference type="GO" id="GO:0006884">
    <property type="term" value="P:cell volume homeostasis"/>
    <property type="evidence" value="ECO:0007669"/>
    <property type="project" value="InterPro"/>
</dbReference>
<dbReference type="Gene3D" id="1.20.1530.20">
    <property type="match status" value="1"/>
</dbReference>
<dbReference type="Gene3D" id="3.30.465.10">
    <property type="match status" value="1"/>
</dbReference>
<dbReference type="Gene3D" id="3.30.70.1450">
    <property type="entry name" value="Regulator of K+ conductance, C-terminal domain"/>
    <property type="match status" value="1"/>
</dbReference>
<dbReference type="HAMAP" id="MF_01075">
    <property type="entry name" value="NhaP2"/>
    <property type="match status" value="1"/>
</dbReference>
<dbReference type="InterPro" id="IPR006153">
    <property type="entry name" value="Cation/H_exchanger_TM"/>
</dbReference>
<dbReference type="InterPro" id="IPR036318">
    <property type="entry name" value="FAD-bd_PCMH-like_sf"/>
</dbReference>
<dbReference type="InterPro" id="IPR016169">
    <property type="entry name" value="FAD-bd_PCMH_sub2"/>
</dbReference>
<dbReference type="InterPro" id="IPR038770">
    <property type="entry name" value="Na+/solute_symporter_sf"/>
</dbReference>
<dbReference type="InterPro" id="IPR023729">
    <property type="entry name" value="NhaP2"/>
</dbReference>
<dbReference type="InterPro" id="IPR006037">
    <property type="entry name" value="RCK_C"/>
</dbReference>
<dbReference type="InterPro" id="IPR036721">
    <property type="entry name" value="RCK_C_sf"/>
</dbReference>
<dbReference type="InterPro" id="IPR005170">
    <property type="entry name" value="Transptr-assoc_dom"/>
</dbReference>
<dbReference type="NCBIfam" id="NF003714">
    <property type="entry name" value="PRK05326.1-1"/>
    <property type="match status" value="1"/>
</dbReference>
<dbReference type="NCBIfam" id="NF003715">
    <property type="entry name" value="PRK05326.1-2"/>
    <property type="match status" value="1"/>
</dbReference>
<dbReference type="NCBIfam" id="NF003716">
    <property type="entry name" value="PRK05326.1-3"/>
    <property type="match status" value="1"/>
</dbReference>
<dbReference type="PANTHER" id="PTHR32507:SF7">
    <property type="entry name" value="K(+)_H(+) ANTIPORTER NHAP2"/>
    <property type="match status" value="1"/>
</dbReference>
<dbReference type="PANTHER" id="PTHR32507">
    <property type="entry name" value="NA(+)/H(+) ANTIPORTER 1"/>
    <property type="match status" value="1"/>
</dbReference>
<dbReference type="Pfam" id="PF03471">
    <property type="entry name" value="CorC_HlyC"/>
    <property type="match status" value="1"/>
</dbReference>
<dbReference type="Pfam" id="PF00999">
    <property type="entry name" value="Na_H_Exchanger"/>
    <property type="match status" value="1"/>
</dbReference>
<dbReference type="Pfam" id="PF02080">
    <property type="entry name" value="TrkA_C"/>
    <property type="match status" value="1"/>
</dbReference>
<dbReference type="SMART" id="SM01091">
    <property type="entry name" value="CorC_HlyC"/>
    <property type="match status" value="1"/>
</dbReference>
<dbReference type="SUPFAM" id="SSF56176">
    <property type="entry name" value="FAD-binding/transporter-associated domain-like"/>
    <property type="match status" value="1"/>
</dbReference>
<dbReference type="SUPFAM" id="SSF116726">
    <property type="entry name" value="TrkA C-terminal domain-like"/>
    <property type="match status" value="1"/>
</dbReference>
<dbReference type="PROSITE" id="PS51202">
    <property type="entry name" value="RCK_C"/>
    <property type="match status" value="1"/>
</dbReference>
<name>NHAP2_AERHH</name>
<reference key="1">
    <citation type="journal article" date="2006" name="J. Bacteriol.">
        <title>Genome sequence of Aeromonas hydrophila ATCC 7966T: jack of all trades.</title>
        <authorList>
            <person name="Seshadri R."/>
            <person name="Joseph S.W."/>
            <person name="Chopra A.K."/>
            <person name="Sha J."/>
            <person name="Shaw J."/>
            <person name="Graf J."/>
            <person name="Haft D.H."/>
            <person name="Wu M."/>
            <person name="Ren Q."/>
            <person name="Rosovitz M.J."/>
            <person name="Madupu R."/>
            <person name="Tallon L."/>
            <person name="Kim M."/>
            <person name="Jin S."/>
            <person name="Vuong H."/>
            <person name="Stine O.C."/>
            <person name="Ali A."/>
            <person name="Horneman A.J."/>
            <person name="Heidelberg J.F."/>
        </authorList>
    </citation>
    <scope>NUCLEOTIDE SEQUENCE [LARGE SCALE GENOMIC DNA]</scope>
    <source>
        <strain>ATCC 7966 / DSM 30187 / BCRC 13018 / CCUG 14551 / JCM 1027 / KCTC 2358 / NCIMB 9240 / NCTC 8049</strain>
    </source>
</reference>
<organism>
    <name type="scientific">Aeromonas hydrophila subsp. hydrophila (strain ATCC 7966 / DSM 30187 / BCRC 13018 / CCUG 14551 / JCM 1027 / KCTC 2358 / NCIMB 9240 / NCTC 8049)</name>
    <dbReference type="NCBI Taxonomy" id="380703"/>
    <lineage>
        <taxon>Bacteria</taxon>
        <taxon>Pseudomonadati</taxon>
        <taxon>Pseudomonadota</taxon>
        <taxon>Gammaproteobacteria</taxon>
        <taxon>Aeromonadales</taxon>
        <taxon>Aeromonadaceae</taxon>
        <taxon>Aeromonas</taxon>
    </lineage>
</organism>